<proteinExistence type="evidence at protein level"/>
<reference key="1">
    <citation type="journal article" date="2011" name="Nature">
        <title>A high-resolution map of human evolutionary constraint using 29 mammals.</title>
        <authorList>
            <person name="Lindblad-Toh K."/>
            <person name="Garber M."/>
            <person name="Zuk O."/>
            <person name="Lin M.F."/>
            <person name="Parker B.J."/>
            <person name="Washietl S."/>
            <person name="Kheradpour P."/>
            <person name="Ernst J."/>
            <person name="Jordan G."/>
            <person name="Mauceli E."/>
            <person name="Ward L.D."/>
            <person name="Lowe C.B."/>
            <person name="Holloway A.K."/>
            <person name="Clamp M."/>
            <person name="Gnerre S."/>
            <person name="Alfoldi J."/>
            <person name="Beal K."/>
            <person name="Chang J."/>
            <person name="Clawson H."/>
            <person name="Cuff J."/>
            <person name="Di Palma F."/>
            <person name="Fitzgerald S."/>
            <person name="Flicek P."/>
            <person name="Guttman M."/>
            <person name="Hubisz M.J."/>
            <person name="Jaffe D.B."/>
            <person name="Jungreis I."/>
            <person name="Kent W.J."/>
            <person name="Kostka D."/>
            <person name="Lara M."/>
            <person name="Martins A.L."/>
            <person name="Massingham T."/>
            <person name="Moltke I."/>
            <person name="Raney B.J."/>
            <person name="Rasmussen M.D."/>
            <person name="Robinson J."/>
            <person name="Stark A."/>
            <person name="Vilella A.J."/>
            <person name="Wen J."/>
            <person name="Xie X."/>
            <person name="Zody M.C."/>
            <person name="Baldwin J."/>
            <person name="Bloom T."/>
            <person name="Chin C.W."/>
            <person name="Heiman D."/>
            <person name="Nicol R."/>
            <person name="Nusbaum C."/>
            <person name="Young S."/>
            <person name="Wilkinson J."/>
            <person name="Worley K.C."/>
            <person name="Kovar C.L."/>
            <person name="Muzny D.M."/>
            <person name="Gibbs R.A."/>
            <person name="Cree A."/>
            <person name="Dihn H.H."/>
            <person name="Fowler G."/>
            <person name="Jhangiani S."/>
            <person name="Joshi V."/>
            <person name="Lee S."/>
            <person name="Lewis L.R."/>
            <person name="Nazareth L.V."/>
            <person name="Okwuonu G."/>
            <person name="Santibanez J."/>
            <person name="Warren W.C."/>
            <person name="Mardis E.R."/>
            <person name="Weinstock G.M."/>
            <person name="Wilson R.K."/>
            <person name="Delehaunty K."/>
            <person name="Dooling D."/>
            <person name="Fronik C."/>
            <person name="Fulton L."/>
            <person name="Fulton B."/>
            <person name="Graves T."/>
            <person name="Minx P."/>
            <person name="Sodergren E."/>
            <person name="Birney E."/>
            <person name="Margulies E.H."/>
            <person name="Herrero J."/>
            <person name="Green E.D."/>
            <person name="Haussler D."/>
            <person name="Siepel A."/>
            <person name="Goldman N."/>
            <person name="Pollard K.S."/>
            <person name="Pedersen J.S."/>
            <person name="Lander E.S."/>
            <person name="Kellis M."/>
        </authorList>
    </citation>
    <scope>NUCLEOTIDE SEQUENCE [LARGE SCALE GENOMIC DNA]</scope>
    <source>
        <strain>Thorbecke</strain>
    </source>
</reference>
<reference evidence="16 17" key="2">
    <citation type="journal article" date="2015" name="Nature">
        <title>Structural basis for stop codon recognition in eukaryotes.</title>
        <authorList>
            <person name="Brown A."/>
            <person name="Shao S."/>
            <person name="Murray J."/>
            <person name="Hegde R.S."/>
            <person name="Ramakrishnan V."/>
        </authorList>
    </citation>
    <scope>STRUCTURE BY ELECTRON MICROSCOPY (3.45 ANGSTROMS) OF 1-134 OF RIBOSOME</scope>
    <scope>FUNCTION</scope>
    <scope>SUBCELLULAR LOCATION</scope>
    <scope>SUBUNIT</scope>
</reference>
<reference evidence="18 19" key="3">
    <citation type="journal article" date="2016" name="Cell">
        <title>Decoding mammalian ribosome-mRNA states by translational GTPase complexes.</title>
        <authorList>
            <person name="Shao S."/>
            <person name="Murray J."/>
            <person name="Brown A."/>
            <person name="Taunton J."/>
            <person name="Ramakrishnan V."/>
            <person name="Hegde R.S."/>
        </authorList>
    </citation>
    <scope>STRUCTURE BY ELECTRON MICROSCOPY (3.31 ANGSTROMS) OF 1-226 OF RIBOSOME</scope>
    <scope>FUNCTION</scope>
    <scope>SUBCELLULAR LOCATION</scope>
    <scope>SUBUNIT</scope>
</reference>
<reference evidence="22" key="4">
    <citation type="journal article" date="2018" name="Cell Rep.">
        <title>tRNA translocation by the eukaryotic 80S ribosome and the impact of GTP hydrolysis.</title>
        <authorList>
            <person name="Flis J."/>
            <person name="Holm M."/>
            <person name="Rundlet E.J."/>
            <person name="Loerke J."/>
            <person name="Hilal T."/>
            <person name="Dabrowski M."/>
            <person name="Burger J."/>
            <person name="Mielke T."/>
            <person name="Blanchard S.C."/>
            <person name="Spahn C.M.T."/>
            <person name="Budkevich T.V."/>
        </authorList>
    </citation>
    <scope>STRUCTURE BY ELECTRON MICROSCOPY (3.60 ANGSTROMS) OF 1-127 OF RIBOSOME</scope>
    <scope>FUNCTION</scope>
    <scope>SUBCELLULAR LOCATION</scope>
    <scope>SUBUNIT</scope>
</reference>
<reference evidence="20 21" key="5">
    <citation type="journal article" date="2018" name="Elife">
        <title>Dual tRNA mimicry in the Cricket paralysis virus IRES uncovers an unexpected similarity with the Hepatitis C Virus IRES.</title>
        <authorList>
            <person name="Pisareva V.P."/>
            <person name="Pisarev A.V."/>
            <person name="Fernandez I.S."/>
        </authorList>
    </citation>
    <scope>STRUCTURE BY ELECTRON MICROSCOPY (3.20 ANGSTROMS) OF RIBOSOME</scope>
    <scope>SUBCELLULAR LOCATION</scope>
    <scope>SUBUNIT</scope>
</reference>
<reference evidence="25 26" key="6">
    <citation type="journal article" date="2018" name="Elife">
        <title>Structures of translationally inactive mammalian ribosomes.</title>
        <authorList>
            <person name="Brown A."/>
            <person name="Baird M.R."/>
            <person name="Yip M.C."/>
            <person name="Murray J."/>
            <person name="Shao S."/>
        </authorList>
    </citation>
    <scope>STRUCTURE BY ELECTRON MICROSCOPY (3.30 ANGSTROMS) OF 1-134 OF RIBOSOME</scope>
    <scope>SUBCELLULAR LOCATION</scope>
    <scope>SUBUNIT</scope>
</reference>
<reference evidence="23 24" key="7">
    <citation type="journal article" date="2018" name="Mol. Cell">
        <title>ZNF598 is a quality control sensor of collided ribosomes.</title>
        <authorList>
            <person name="Juszkiewicz S."/>
            <person name="Chandrasekaran V."/>
            <person name="Lin Z."/>
            <person name="Kraatz S."/>
            <person name="Ramakrishnan V."/>
            <person name="Hegde R.S."/>
        </authorList>
    </citation>
    <scope>STRUCTURE BY ELECTRON MICROSCOPY (3.80 ANGSTROMS) OF RIBOSOME</scope>
    <scope>SUBCELLULAR LOCATION</scope>
    <scope>SUBUNIT</scope>
</reference>
<reference evidence="29 30" key="8">
    <citation type="journal article" date="2019" name="Elife">
        <title>Structural and mutational analysis of the ribosome-arresting human XBP1u.</title>
        <authorList>
            <person name="Shanmuganathan V."/>
            <person name="Schiller N."/>
            <person name="Magoulopoulou A."/>
            <person name="Cheng J."/>
            <person name="Braunger K."/>
            <person name="Cymer F."/>
            <person name="Berninghausen O."/>
            <person name="Beatrix B."/>
            <person name="Kohno K."/>
            <person name="von Heijne G."/>
            <person name="Beckmann R."/>
        </authorList>
    </citation>
    <scope>STRUCTURE BY ELECTRON MICROSCOPY (3.00 ANGSTROMS) OF 1-134 OF RIBOSOME</scope>
    <scope>SUBCELLULAR LOCATION</scope>
    <scope>SUBUNIT</scope>
</reference>
<reference evidence="27 28" key="9">
    <citation type="journal article" date="2019" name="EMBO J.">
        <title>The Israeli acute paralysis virus IRES captures host ribosomes by mimicking a ribosomal state with hybrid tRNAs.</title>
        <authorList>
            <person name="Acosta-Reyes F."/>
            <person name="Neupane R."/>
            <person name="Frank J."/>
            <person name="Fernandez I.S."/>
        </authorList>
    </citation>
    <scope>STRUCTURE BY ELECTRON MICROSCOPY (3.10 ANGSTROMS) OF RIBOSOME</scope>
    <scope>SUBCELLULAR LOCATION</scope>
    <scope>SUBUNIT</scope>
</reference>
<reference evidence="31" key="10">
    <citation type="journal article" date="2019" name="Nat. Struct. Mol. Biol.">
        <title>Mechanism of ribosome stalling during translation of a poly(A) tail.</title>
        <authorList>
            <person name="Chandrasekaran V."/>
            <person name="Juszkiewicz S."/>
            <person name="Choi J."/>
            <person name="Puglisi J.D."/>
            <person name="Brown A."/>
            <person name="Shao S."/>
            <person name="Ramakrishnan V."/>
            <person name="Hegde R.S."/>
        </authorList>
    </citation>
    <scope>STRUCTURE BY ELECTRON MICROSCOPY (2.80 ANGSTROMS) OF RIBOSOME</scope>
    <scope>SUBCELLULAR LOCATION</scope>
    <scope>SUBUNIT</scope>
</reference>
<reference evidence="32 33" key="11">
    <citation type="journal article" date="2020" name="Cell Rep.">
        <title>The Halastavi arva virus intergenic region IRES promotes translation by the simplest possible initiation mechanism.</title>
        <authorList>
            <person name="Abaeva I.S."/>
            <person name="Vicens Q."/>
            <person name="Bochler A."/>
            <person name="Soufari H."/>
            <person name="Simonetti A."/>
            <person name="Pestova T.V."/>
            <person name="Hashem Y."/>
            <person name="Hellen C.U.T."/>
        </authorList>
    </citation>
    <scope>STRUCTURE BY ELECTRON MICROSCOPY (3.49 ANGSTROMS) OF 1-134 OF RIBOSOME</scope>
    <scope>SUBCELLULAR LOCATION</scope>
    <scope>SUBUNIT</scope>
</reference>
<reference evidence="35 36" key="12">
    <citation type="journal article" date="2022" name="Mol. Cell">
        <title>Direct epitranscriptomic regulation of mammalian translation initiation through N4-acetylcytidine.</title>
        <authorList>
            <person name="Arango D."/>
            <person name="Sturgill D."/>
            <person name="Yang R."/>
            <person name="Kanai T."/>
            <person name="Bauer P."/>
            <person name="Roy J."/>
            <person name="Wang Z."/>
            <person name="Hosogane M."/>
            <person name="Schiffers S."/>
            <person name="Oberdoerffer S."/>
        </authorList>
    </citation>
    <scope>STRUCTURE BY ELECTRON MICROSCOPY (2.80 ANGSTROMS) OF 1-134 OF RIBOSOME</scope>
    <scope>SUBCELLULAR LOCATION</scope>
    <scope>SUBUNIT</scope>
</reference>
<reference evidence="34" key="13">
    <citation type="journal article" date="2023" name="Nature">
        <title>A molecular network of conserved factors keeps ribosomes dormant in the egg.</title>
        <authorList>
            <person name="Leesch F."/>
            <person name="Lorenzo-Orts L."/>
            <person name="Pribitzer C."/>
            <person name="Grishkovskaya I."/>
            <person name="Roehsner J."/>
            <person name="Chugunova A."/>
            <person name="Matzinger M."/>
            <person name="Roitinger E."/>
            <person name="Belacic K."/>
            <person name="Kandolf S."/>
            <person name="Lin T.Y."/>
            <person name="Mechtler K."/>
            <person name="Meinhart A."/>
            <person name="Haselbach D."/>
            <person name="Pauli A."/>
        </authorList>
    </citation>
    <scope>STRUCTURE BY ELECTRON MICROSCOPY (2.30 ANGSTROMS) OF RIBOSOME</scope>
    <scope>SUBCELLULAR LOCATION</scope>
    <scope>SUBUNIT</scope>
</reference>
<comment type="function">
    <text evidence="3 4 8">Component of the large ribosomal subunit (PubMed:26245381, PubMed:27863242, PubMed:30517857). The ribosome is a large ribonucleoprotein complex responsible for the synthesis of proteins in the cell (PubMed:26245381, PubMed:27863242, PubMed:30517857).</text>
</comment>
<comment type="subunit">
    <text evidence="1 3 4 5 6 7 8 9 10 11 12 13 14">Component of the large ribosomal subunit (PubMed:26245381, PubMed:27863242, PubMed:29856316, PubMed:30293783, PubMed:30355441, PubMed:30517857, PubMed:31246176, PubMed:31609474, PubMed:31768042, PubMed:33296660, PubMed:35679869, PubMed:36653451). Interacts with DHX33 (By similarity).</text>
</comment>
<comment type="subcellular location">
    <subcellularLocation>
        <location evidence="3 4 5 6 7 8 9 10 11 12 13 14">Cytoplasm</location>
    </subcellularLocation>
</comment>
<comment type="PTM">
    <text evidence="1">Ufmylated by UFL1 in response to endoplasmic reticulum stress, promoting reticulophagy of endoplasmic reticulum sheets.</text>
</comment>
<comment type="similarity">
    <text evidence="15">Belongs to the universal ribosomal protein uL24 family.</text>
</comment>
<evidence type="ECO:0000250" key="1">
    <source>
        <dbReference type="UniProtKB" id="P61254"/>
    </source>
</evidence>
<evidence type="ECO:0000256" key="2">
    <source>
        <dbReference type="SAM" id="MobiDB-lite"/>
    </source>
</evidence>
<evidence type="ECO:0000269" key="3">
    <source>
    </source>
</evidence>
<evidence type="ECO:0000269" key="4">
    <source>
    </source>
</evidence>
<evidence type="ECO:0000269" key="5">
    <source>
    </source>
</evidence>
<evidence type="ECO:0000269" key="6">
    <source>
    </source>
</evidence>
<evidence type="ECO:0000269" key="7">
    <source>
    </source>
</evidence>
<evidence type="ECO:0000269" key="8">
    <source>
    </source>
</evidence>
<evidence type="ECO:0000269" key="9">
    <source>
    </source>
</evidence>
<evidence type="ECO:0000269" key="10">
    <source>
    </source>
</evidence>
<evidence type="ECO:0000269" key="11">
    <source>
    </source>
</evidence>
<evidence type="ECO:0000269" key="12">
    <source>
    </source>
</evidence>
<evidence type="ECO:0000269" key="13">
    <source>
    </source>
</evidence>
<evidence type="ECO:0000269" key="14">
    <source>
    </source>
</evidence>
<evidence type="ECO:0000305" key="15"/>
<evidence type="ECO:0007744" key="16">
    <source>
        <dbReference type="PDB" id="3JAG"/>
    </source>
</evidence>
<evidence type="ECO:0007744" key="17">
    <source>
        <dbReference type="PDB" id="3JAH"/>
    </source>
</evidence>
<evidence type="ECO:0007744" key="18">
    <source>
        <dbReference type="PDB" id="5LZS"/>
    </source>
</evidence>
<evidence type="ECO:0007744" key="19">
    <source>
        <dbReference type="PDB" id="5LZT"/>
    </source>
</evidence>
<evidence type="ECO:0007744" key="20">
    <source>
        <dbReference type="PDB" id="6D90"/>
    </source>
</evidence>
<evidence type="ECO:0007744" key="21">
    <source>
        <dbReference type="PDB" id="6D9J"/>
    </source>
</evidence>
<evidence type="ECO:0007744" key="22">
    <source>
        <dbReference type="PDB" id="6GZ3"/>
    </source>
</evidence>
<evidence type="ECO:0007744" key="23">
    <source>
        <dbReference type="PDB" id="6HCF"/>
    </source>
</evidence>
<evidence type="ECO:0007744" key="24">
    <source>
        <dbReference type="PDB" id="6HCJ"/>
    </source>
</evidence>
<evidence type="ECO:0007744" key="25">
    <source>
        <dbReference type="PDB" id="6MTB"/>
    </source>
</evidence>
<evidence type="ECO:0007744" key="26">
    <source>
        <dbReference type="PDB" id="6MTC"/>
    </source>
</evidence>
<evidence type="ECO:0007744" key="27">
    <source>
        <dbReference type="PDB" id="6P5I"/>
    </source>
</evidence>
<evidence type="ECO:0007744" key="28">
    <source>
        <dbReference type="PDB" id="6P5J"/>
    </source>
</evidence>
<evidence type="ECO:0007744" key="29">
    <source>
        <dbReference type="PDB" id="6R5Q"/>
    </source>
</evidence>
<evidence type="ECO:0007744" key="30">
    <source>
        <dbReference type="PDB" id="6R6G"/>
    </source>
</evidence>
<evidence type="ECO:0007744" key="31">
    <source>
        <dbReference type="PDB" id="6SGC"/>
    </source>
</evidence>
<evidence type="ECO:0007744" key="32">
    <source>
        <dbReference type="PDB" id="6ZVK"/>
    </source>
</evidence>
<evidence type="ECO:0007744" key="33">
    <source>
        <dbReference type="PDB" id="7A01"/>
    </source>
</evidence>
<evidence type="ECO:0007744" key="34">
    <source>
        <dbReference type="PDB" id="7OYD"/>
    </source>
</evidence>
<evidence type="ECO:0007744" key="35">
    <source>
        <dbReference type="PDB" id="7UCJ"/>
    </source>
</evidence>
<evidence type="ECO:0007744" key="36">
    <source>
        <dbReference type="PDB" id="7UCK"/>
    </source>
</evidence>
<gene>
    <name type="primary">RPL26</name>
</gene>
<keyword id="KW-0002">3D-structure</keyword>
<keyword id="KW-0963">Cytoplasm</keyword>
<keyword id="KW-1017">Isopeptide bond</keyword>
<keyword id="KW-0597">Phosphoprotein</keyword>
<keyword id="KW-1185">Reference proteome</keyword>
<keyword id="KW-0687">Ribonucleoprotein</keyword>
<keyword id="KW-0689">Ribosomal protein</keyword>
<keyword id="KW-0832">Ubl conjugation</keyword>
<protein>
    <recommendedName>
        <fullName>Large ribosomal subunit protein uL24</fullName>
    </recommendedName>
    <alternativeName>
        <fullName>60S ribosomal protein L26</fullName>
    </alternativeName>
</protein>
<name>RL26_RABIT</name>
<organism>
    <name type="scientific">Oryctolagus cuniculus</name>
    <name type="common">Rabbit</name>
    <dbReference type="NCBI Taxonomy" id="9986"/>
    <lineage>
        <taxon>Eukaryota</taxon>
        <taxon>Metazoa</taxon>
        <taxon>Chordata</taxon>
        <taxon>Craniata</taxon>
        <taxon>Vertebrata</taxon>
        <taxon>Euteleostomi</taxon>
        <taxon>Mammalia</taxon>
        <taxon>Eutheria</taxon>
        <taxon>Euarchontoglires</taxon>
        <taxon>Glires</taxon>
        <taxon>Lagomorpha</taxon>
        <taxon>Leporidae</taxon>
        <taxon>Oryctolagus</taxon>
    </lineage>
</organism>
<dbReference type="EMBL" id="AAGW02049533">
    <property type="status" value="NOT_ANNOTATED_CDS"/>
    <property type="molecule type" value="Genomic_DNA"/>
</dbReference>
<dbReference type="RefSeq" id="XP_002719046.1">
    <property type="nucleotide sequence ID" value="XM_002719000.5"/>
</dbReference>
<dbReference type="RefSeq" id="XP_051681154.1">
    <property type="nucleotide sequence ID" value="XM_051825194.2"/>
</dbReference>
<dbReference type="PDB" id="3JAG">
    <property type="method" value="EM"/>
    <property type="resolution" value="3.65 A"/>
    <property type="chains" value="Y=1-134"/>
</dbReference>
<dbReference type="PDB" id="3JAH">
    <property type="method" value="EM"/>
    <property type="resolution" value="3.45 A"/>
    <property type="chains" value="Y=1-134"/>
</dbReference>
<dbReference type="PDB" id="3JAI">
    <property type="method" value="EM"/>
    <property type="resolution" value="3.65 A"/>
    <property type="chains" value="Y=1-134"/>
</dbReference>
<dbReference type="PDB" id="5LZS">
    <property type="method" value="EM"/>
    <property type="resolution" value="3.31 A"/>
    <property type="chains" value="Y=1-145"/>
</dbReference>
<dbReference type="PDB" id="5LZT">
    <property type="method" value="EM"/>
    <property type="resolution" value="3.65 A"/>
    <property type="chains" value="Y=1-145"/>
</dbReference>
<dbReference type="PDB" id="5LZU">
    <property type="method" value="EM"/>
    <property type="resolution" value="3.75 A"/>
    <property type="chains" value="Y=1-145"/>
</dbReference>
<dbReference type="PDB" id="5LZV">
    <property type="method" value="EM"/>
    <property type="resolution" value="3.35 A"/>
    <property type="chains" value="Y=1-145"/>
</dbReference>
<dbReference type="PDB" id="5LZW">
    <property type="method" value="EM"/>
    <property type="resolution" value="3.53 A"/>
    <property type="chains" value="Y=1-145"/>
</dbReference>
<dbReference type="PDB" id="5LZX">
    <property type="method" value="EM"/>
    <property type="resolution" value="3.67 A"/>
    <property type="chains" value="Y=1-145"/>
</dbReference>
<dbReference type="PDB" id="5LZY">
    <property type="method" value="EM"/>
    <property type="resolution" value="3.99 A"/>
    <property type="chains" value="Y=1-145"/>
</dbReference>
<dbReference type="PDB" id="5LZZ">
    <property type="method" value="EM"/>
    <property type="resolution" value="3.47 A"/>
    <property type="chains" value="Y=1-145"/>
</dbReference>
<dbReference type="PDB" id="6D90">
    <property type="method" value="EM"/>
    <property type="resolution" value="3.20 A"/>
    <property type="chains" value="Y=1-145"/>
</dbReference>
<dbReference type="PDB" id="6D9J">
    <property type="method" value="EM"/>
    <property type="resolution" value="3.20 A"/>
    <property type="chains" value="Y=1-145"/>
</dbReference>
<dbReference type="PDB" id="6FTG">
    <property type="method" value="EM"/>
    <property type="resolution" value="9.10 A"/>
    <property type="chains" value="Y=1-134"/>
</dbReference>
<dbReference type="PDB" id="6FTI">
    <property type="method" value="EM"/>
    <property type="resolution" value="4.20 A"/>
    <property type="chains" value="Y=1-134"/>
</dbReference>
<dbReference type="PDB" id="6FTJ">
    <property type="method" value="EM"/>
    <property type="resolution" value="4.70 A"/>
    <property type="chains" value="Y=1-134"/>
</dbReference>
<dbReference type="PDB" id="6GZ3">
    <property type="method" value="EM"/>
    <property type="resolution" value="3.60 A"/>
    <property type="chains" value="AY=1-127"/>
</dbReference>
<dbReference type="PDB" id="6HCF">
    <property type="method" value="EM"/>
    <property type="resolution" value="3.90 A"/>
    <property type="chains" value="Y3=1-145"/>
</dbReference>
<dbReference type="PDB" id="6HCJ">
    <property type="method" value="EM"/>
    <property type="resolution" value="3.80 A"/>
    <property type="chains" value="Y3=1-145"/>
</dbReference>
<dbReference type="PDB" id="6HCM">
    <property type="method" value="EM"/>
    <property type="resolution" value="6.80 A"/>
    <property type="chains" value="Y3=1-145"/>
</dbReference>
<dbReference type="PDB" id="6HCQ">
    <property type="method" value="EM"/>
    <property type="resolution" value="6.50 A"/>
    <property type="chains" value="Y3=1-145"/>
</dbReference>
<dbReference type="PDB" id="6MTB">
    <property type="method" value="EM"/>
    <property type="resolution" value="3.60 A"/>
    <property type="chains" value="Y=1-134"/>
</dbReference>
<dbReference type="PDB" id="6MTC">
    <property type="method" value="EM"/>
    <property type="resolution" value="3.40 A"/>
    <property type="chains" value="Y=1-134"/>
</dbReference>
<dbReference type="PDB" id="6MTD">
    <property type="method" value="EM"/>
    <property type="resolution" value="3.30 A"/>
    <property type="chains" value="Y=1-134"/>
</dbReference>
<dbReference type="PDB" id="6MTE">
    <property type="method" value="EM"/>
    <property type="resolution" value="3.40 A"/>
    <property type="chains" value="Y=1-134"/>
</dbReference>
<dbReference type="PDB" id="6P5I">
    <property type="method" value="EM"/>
    <property type="resolution" value="3.10 A"/>
    <property type="chains" value="AY=1-145"/>
</dbReference>
<dbReference type="PDB" id="6P5J">
    <property type="method" value="EM"/>
    <property type="resolution" value="3.10 A"/>
    <property type="chains" value="AY=1-145"/>
</dbReference>
<dbReference type="PDB" id="6P5K">
    <property type="method" value="EM"/>
    <property type="resolution" value="3.10 A"/>
    <property type="chains" value="AY=1-145"/>
</dbReference>
<dbReference type="PDB" id="6P5N">
    <property type="method" value="EM"/>
    <property type="resolution" value="3.20 A"/>
    <property type="chains" value="AY=1-145"/>
</dbReference>
<dbReference type="PDB" id="6R5Q">
    <property type="method" value="EM"/>
    <property type="resolution" value="3.00 A"/>
    <property type="chains" value="Y=1-134"/>
</dbReference>
<dbReference type="PDB" id="6R6G">
    <property type="method" value="EM"/>
    <property type="resolution" value="3.70 A"/>
    <property type="chains" value="Y=1-134"/>
</dbReference>
<dbReference type="PDB" id="6R6P">
    <property type="method" value="EM"/>
    <property type="resolution" value="3.10 A"/>
    <property type="chains" value="Y=1-134"/>
</dbReference>
<dbReference type="PDB" id="6R7Q">
    <property type="method" value="EM"/>
    <property type="resolution" value="3.90 A"/>
    <property type="chains" value="Y=1-134"/>
</dbReference>
<dbReference type="PDB" id="6SGC">
    <property type="method" value="EM"/>
    <property type="resolution" value="2.80 A"/>
    <property type="chains" value="Y2=1-145"/>
</dbReference>
<dbReference type="PDB" id="6T59">
    <property type="method" value="EM"/>
    <property type="resolution" value="3.11 A"/>
    <property type="chains" value="Y3=1-145"/>
</dbReference>
<dbReference type="PDB" id="6ZVK">
    <property type="method" value="EM"/>
    <property type="resolution" value="3.49 A"/>
    <property type="chains" value="o2=1-134"/>
</dbReference>
<dbReference type="PDB" id="7A01">
    <property type="method" value="EM"/>
    <property type="resolution" value="3.60 A"/>
    <property type="chains" value="o2=1-134"/>
</dbReference>
<dbReference type="PDB" id="7MDZ">
    <property type="method" value="EM"/>
    <property type="resolution" value="3.20 A"/>
    <property type="chains" value="Y=1-145"/>
</dbReference>
<dbReference type="PDB" id="7NFX">
    <property type="method" value="EM"/>
    <property type="resolution" value="3.20 A"/>
    <property type="chains" value="Y=1-145"/>
</dbReference>
<dbReference type="PDB" id="7NWG">
    <property type="method" value="EM"/>
    <property type="resolution" value="3.80 A"/>
    <property type="chains" value="Y3=1-132"/>
</dbReference>
<dbReference type="PDB" id="7NWH">
    <property type="method" value="EM"/>
    <property type="resolution" value="4.10 A"/>
    <property type="chains" value="Y=1-134"/>
</dbReference>
<dbReference type="PDB" id="7NWI">
    <property type="method" value="EM"/>
    <property type="resolution" value="3.13 A"/>
    <property type="chains" value="Y=1-134"/>
</dbReference>
<dbReference type="PDB" id="7O7Y">
    <property type="method" value="EM"/>
    <property type="resolution" value="2.20 A"/>
    <property type="chains" value="BY=1-145"/>
</dbReference>
<dbReference type="PDB" id="7O7Z">
    <property type="method" value="EM"/>
    <property type="resolution" value="2.40 A"/>
    <property type="chains" value="BY=1-145"/>
</dbReference>
<dbReference type="PDB" id="7O80">
    <property type="method" value="EM"/>
    <property type="resolution" value="2.90 A"/>
    <property type="chains" value="BY=1-145"/>
</dbReference>
<dbReference type="PDB" id="7O81">
    <property type="method" value="EM"/>
    <property type="resolution" value="3.10 A"/>
    <property type="chains" value="BY=1-145"/>
</dbReference>
<dbReference type="PDB" id="7OBR">
    <property type="method" value="EM"/>
    <property type="resolution" value="2.80 A"/>
    <property type="chains" value="Y=1-145"/>
</dbReference>
<dbReference type="PDB" id="7OYD">
    <property type="method" value="EM"/>
    <property type="resolution" value="2.30 A"/>
    <property type="chains" value="Y=1-145"/>
</dbReference>
<dbReference type="PDB" id="7QWQ">
    <property type="method" value="EM"/>
    <property type="resolution" value="2.83 A"/>
    <property type="chains" value="Y=1-145"/>
</dbReference>
<dbReference type="PDB" id="7QWR">
    <property type="method" value="EM"/>
    <property type="resolution" value="2.90 A"/>
    <property type="chains" value="Y=1-145"/>
</dbReference>
<dbReference type="PDB" id="7QWS">
    <property type="method" value="EM"/>
    <property type="resolution" value="3.40 A"/>
    <property type="chains" value="Y=1-145"/>
</dbReference>
<dbReference type="PDB" id="7TM3">
    <property type="method" value="EM"/>
    <property type="resolution" value="3.25 A"/>
    <property type="chains" value="Y=1-145"/>
</dbReference>
<dbReference type="PDB" id="7TOQ">
    <property type="method" value="EM"/>
    <property type="resolution" value="3.10 A"/>
    <property type="chains" value="AL26=1-134"/>
</dbReference>
<dbReference type="PDB" id="7TOR">
    <property type="method" value="EM"/>
    <property type="resolution" value="2.90 A"/>
    <property type="chains" value="AL26=1-134"/>
</dbReference>
<dbReference type="PDB" id="7TUT">
    <property type="method" value="EM"/>
    <property type="resolution" value="3.88 A"/>
    <property type="chains" value="Y=1-145"/>
</dbReference>
<dbReference type="PDB" id="7UCJ">
    <property type="method" value="EM"/>
    <property type="resolution" value="3.10 A"/>
    <property type="chains" value="Y=1-134"/>
</dbReference>
<dbReference type="PDB" id="7UCK">
    <property type="method" value="EM"/>
    <property type="resolution" value="2.80 A"/>
    <property type="chains" value="Y=1-134"/>
</dbReference>
<dbReference type="PDB" id="8B5L">
    <property type="method" value="EM"/>
    <property type="resolution" value="2.86 A"/>
    <property type="chains" value="Y=1-134"/>
</dbReference>
<dbReference type="PDB" id="8B6C">
    <property type="method" value="EM"/>
    <property type="resolution" value="2.79 A"/>
    <property type="chains" value="Y=1-134"/>
</dbReference>
<dbReference type="PDB" id="8BHF">
    <property type="method" value="EM"/>
    <property type="resolution" value="3.10 A"/>
    <property type="chains" value="L1=1-134"/>
</dbReference>
<dbReference type="PDB" id="8BPO">
    <property type="method" value="EM"/>
    <property type="resolution" value="2.80 A"/>
    <property type="chains" value="X2=1-145"/>
</dbReference>
<dbReference type="PDB" id="8BTK">
    <property type="method" value="EM"/>
    <property type="resolution" value="3.50 A"/>
    <property type="chains" value="BY=1-145"/>
</dbReference>
<dbReference type="PDB" id="8P2K">
    <property type="method" value="EM"/>
    <property type="resolution" value="2.90 A"/>
    <property type="chains" value="BY=1-145"/>
</dbReference>
<dbReference type="PDB" id="8RJB">
    <property type="method" value="EM"/>
    <property type="resolution" value="2.69 A"/>
    <property type="chains" value="Y=1-145"/>
</dbReference>
<dbReference type="PDB" id="8RJC">
    <property type="method" value="EM"/>
    <property type="resolution" value="2.90 A"/>
    <property type="chains" value="Y=1-145"/>
</dbReference>
<dbReference type="PDB" id="8RJD">
    <property type="method" value="EM"/>
    <property type="resolution" value="2.79 A"/>
    <property type="chains" value="Y=1-145"/>
</dbReference>
<dbReference type="PDB" id="8SCB">
    <property type="method" value="EM"/>
    <property type="resolution" value="2.50 A"/>
    <property type="chains" value="Y=1-145"/>
</dbReference>
<dbReference type="PDB" id="8VFT">
    <property type="method" value="EM"/>
    <property type="resolution" value="3.30 A"/>
    <property type="chains" value="Y=1-145"/>
</dbReference>
<dbReference type="PDB" id="9BDL">
    <property type="method" value="EM"/>
    <property type="resolution" value="2.80 A"/>
    <property type="chains" value="AL26=1-134"/>
</dbReference>
<dbReference type="PDB" id="9BDN">
    <property type="method" value="EM"/>
    <property type="resolution" value="3.10 A"/>
    <property type="chains" value="AL26=1-134"/>
</dbReference>
<dbReference type="PDB" id="9BDP">
    <property type="method" value="EM"/>
    <property type="resolution" value="3.70 A"/>
    <property type="chains" value="AL26=1-134"/>
</dbReference>
<dbReference type="PDB" id="9F1B">
    <property type="method" value="EM"/>
    <property type="resolution" value="3.01 A"/>
    <property type="chains" value="BY=1-145"/>
</dbReference>
<dbReference type="PDB" id="9F1C">
    <property type="method" value="EM"/>
    <property type="resolution" value="3.78 A"/>
    <property type="chains" value="BY=1-145"/>
</dbReference>
<dbReference type="PDB" id="9F1D">
    <property type="method" value="EM"/>
    <property type="resolution" value="3.26 A"/>
    <property type="chains" value="BY=1-145"/>
</dbReference>
<dbReference type="PDBsum" id="3JAG"/>
<dbReference type="PDBsum" id="3JAH"/>
<dbReference type="PDBsum" id="3JAI"/>
<dbReference type="PDBsum" id="5LZS"/>
<dbReference type="PDBsum" id="5LZT"/>
<dbReference type="PDBsum" id="5LZU"/>
<dbReference type="PDBsum" id="5LZV"/>
<dbReference type="PDBsum" id="5LZW"/>
<dbReference type="PDBsum" id="5LZX"/>
<dbReference type="PDBsum" id="5LZY"/>
<dbReference type="PDBsum" id="5LZZ"/>
<dbReference type="PDBsum" id="6D90"/>
<dbReference type="PDBsum" id="6D9J"/>
<dbReference type="PDBsum" id="6FTG"/>
<dbReference type="PDBsum" id="6FTI"/>
<dbReference type="PDBsum" id="6FTJ"/>
<dbReference type="PDBsum" id="6GZ3"/>
<dbReference type="PDBsum" id="6HCF"/>
<dbReference type="PDBsum" id="6HCJ"/>
<dbReference type="PDBsum" id="6HCM"/>
<dbReference type="PDBsum" id="6HCQ"/>
<dbReference type="PDBsum" id="6MTB"/>
<dbReference type="PDBsum" id="6MTC"/>
<dbReference type="PDBsum" id="6MTD"/>
<dbReference type="PDBsum" id="6MTE"/>
<dbReference type="PDBsum" id="6P5I"/>
<dbReference type="PDBsum" id="6P5J"/>
<dbReference type="PDBsum" id="6P5K"/>
<dbReference type="PDBsum" id="6P5N"/>
<dbReference type="PDBsum" id="6R5Q"/>
<dbReference type="PDBsum" id="6R6G"/>
<dbReference type="PDBsum" id="6R6P"/>
<dbReference type="PDBsum" id="6R7Q"/>
<dbReference type="PDBsum" id="6SGC"/>
<dbReference type="PDBsum" id="6T59"/>
<dbReference type="PDBsum" id="6ZVK"/>
<dbReference type="PDBsum" id="7A01"/>
<dbReference type="PDBsum" id="7MDZ"/>
<dbReference type="PDBsum" id="7NFX"/>
<dbReference type="PDBsum" id="7NWG"/>
<dbReference type="PDBsum" id="7NWH"/>
<dbReference type="PDBsum" id="7NWI"/>
<dbReference type="PDBsum" id="7O7Y"/>
<dbReference type="PDBsum" id="7O7Z"/>
<dbReference type="PDBsum" id="7O80"/>
<dbReference type="PDBsum" id="7O81"/>
<dbReference type="PDBsum" id="7OBR"/>
<dbReference type="PDBsum" id="7OYD"/>
<dbReference type="PDBsum" id="7QWQ"/>
<dbReference type="PDBsum" id="7QWR"/>
<dbReference type="PDBsum" id="7QWS"/>
<dbReference type="PDBsum" id="7TM3"/>
<dbReference type="PDBsum" id="7TOQ"/>
<dbReference type="PDBsum" id="7TOR"/>
<dbReference type="PDBsum" id="7TUT"/>
<dbReference type="PDBsum" id="7UCJ"/>
<dbReference type="PDBsum" id="7UCK"/>
<dbReference type="PDBsum" id="8B5L"/>
<dbReference type="PDBsum" id="8B6C"/>
<dbReference type="PDBsum" id="8BHF"/>
<dbReference type="PDBsum" id="8BPO"/>
<dbReference type="PDBsum" id="8BTK"/>
<dbReference type="PDBsum" id="8P2K"/>
<dbReference type="PDBsum" id="8RJB"/>
<dbReference type="PDBsum" id="8RJC"/>
<dbReference type="PDBsum" id="8RJD"/>
<dbReference type="PDBsum" id="8SCB"/>
<dbReference type="PDBsum" id="8VFT"/>
<dbReference type="PDBsum" id="9BDL"/>
<dbReference type="PDBsum" id="9BDN"/>
<dbReference type="PDBsum" id="9BDP"/>
<dbReference type="PDBsum" id="9F1B"/>
<dbReference type="PDBsum" id="9F1C"/>
<dbReference type="PDBsum" id="9F1D"/>
<dbReference type="EMDB" id="EMD-0098"/>
<dbReference type="EMDB" id="EMD-0099"/>
<dbReference type="EMDB" id="EMD-0100"/>
<dbReference type="EMDB" id="EMD-0192"/>
<dbReference type="EMDB" id="EMD-0194"/>
<dbReference type="EMDB" id="EMD-0195"/>
<dbReference type="EMDB" id="EMD-0197"/>
<dbReference type="EMDB" id="EMD-10181"/>
<dbReference type="EMDB" id="EMD-10380"/>
<dbReference type="EMDB" id="EMD-11459"/>
<dbReference type="EMDB" id="EMD-11590"/>
<dbReference type="EMDB" id="EMD-12303"/>
<dbReference type="EMDB" id="EMD-12631"/>
<dbReference type="EMDB" id="EMD-12632"/>
<dbReference type="EMDB" id="EMD-12633"/>
<dbReference type="EMDB" id="EMD-12756"/>
<dbReference type="EMDB" id="EMD-12757"/>
<dbReference type="EMDB" id="EMD-12758"/>
<dbReference type="EMDB" id="EMD-12759"/>
<dbReference type="EMDB" id="EMD-12801"/>
<dbReference type="EMDB" id="EMD-13114"/>
<dbReference type="EMDB" id="EMD-14191"/>
<dbReference type="EMDB" id="EMD-14192"/>
<dbReference type="EMDB" id="EMD-14193"/>
<dbReference type="EMDB" id="EMD-15860"/>
<dbReference type="EMDB" id="EMD-15863"/>
<dbReference type="EMDB" id="EMD-16052"/>
<dbReference type="EMDB" id="EMD-16155"/>
<dbReference type="EMDB" id="EMD-16232"/>
<dbReference type="EMDB" id="EMD-17367"/>
<dbReference type="EMDB" id="EMD-19195"/>
<dbReference type="EMDB" id="EMD-19197"/>
<dbReference type="EMDB" id="EMD-19198"/>
<dbReference type="EMDB" id="EMD-20255"/>
<dbReference type="EMDB" id="EMD-20256"/>
<dbReference type="EMDB" id="EMD-20257"/>
<dbReference type="EMDB" id="EMD-20258"/>
<dbReference type="EMDB" id="EMD-23785"/>
<dbReference type="EMDB" id="EMD-25994"/>
<dbReference type="EMDB" id="EMD-26035"/>
<dbReference type="EMDB" id="EMD-26036"/>
<dbReference type="EMDB" id="EMD-26133"/>
<dbReference type="EMDB" id="EMD-26444"/>
<dbReference type="EMDB" id="EMD-26445"/>
<dbReference type="EMDB" id="EMD-40344"/>
<dbReference type="EMDB" id="EMD-4130"/>
<dbReference type="EMDB" id="EMD-4131"/>
<dbReference type="EMDB" id="EMD-4132"/>
<dbReference type="EMDB" id="EMD-4133"/>
<dbReference type="EMDB" id="EMD-4134"/>
<dbReference type="EMDB" id="EMD-4135"/>
<dbReference type="EMDB" id="EMD-4136"/>
<dbReference type="EMDB" id="EMD-4137"/>
<dbReference type="EMDB" id="EMD-4300"/>
<dbReference type="EMDB" id="EMD-4315"/>
<dbReference type="EMDB" id="EMD-4316"/>
<dbReference type="EMDB" id="EMD-4317"/>
<dbReference type="EMDB" id="EMD-43189"/>
<dbReference type="EMDB" id="EMD-44461"/>
<dbReference type="EMDB" id="EMD-44463"/>
<dbReference type="EMDB" id="EMD-44464"/>
<dbReference type="EMDB" id="EMD-4729"/>
<dbReference type="EMDB" id="EMD-4735"/>
<dbReference type="EMDB" id="EMD-4737"/>
<dbReference type="EMDB" id="EMD-4745"/>
<dbReference type="EMDB" id="EMD-50124"/>
<dbReference type="EMDB" id="EMD-50125"/>
<dbReference type="EMDB" id="EMD-50126"/>
<dbReference type="EMDB" id="EMD-7834"/>
<dbReference type="EMDB" id="EMD-7836"/>
<dbReference type="EMDB" id="EMD-9237"/>
<dbReference type="EMDB" id="EMD-9239"/>
<dbReference type="EMDB" id="EMD-9240"/>
<dbReference type="EMDB" id="EMD-9242"/>
<dbReference type="SMR" id="G1SQH0"/>
<dbReference type="FunCoup" id="G1SQH0">
    <property type="interactions" value="1506"/>
</dbReference>
<dbReference type="IntAct" id="G1SQH0">
    <property type="interactions" value="1"/>
</dbReference>
<dbReference type="STRING" id="9986.ENSOCUP00000005347"/>
<dbReference type="PaxDb" id="9986-ENSOCUP00000005347"/>
<dbReference type="Ensembl" id="ENSOCUT00000006170.3">
    <property type="protein sequence ID" value="ENSOCUP00000005347.2"/>
    <property type="gene ID" value="ENSOCUG00000006538.4"/>
</dbReference>
<dbReference type="GeneID" id="100347930"/>
<dbReference type="KEGG" id="ocu:100347930"/>
<dbReference type="CTD" id="6154"/>
<dbReference type="eggNOG" id="KOG3401">
    <property type="taxonomic scope" value="Eukaryota"/>
</dbReference>
<dbReference type="GeneTree" id="ENSGT00390000014165"/>
<dbReference type="HOGENOM" id="CLU_093240_0_0_1"/>
<dbReference type="InParanoid" id="G1SQH0"/>
<dbReference type="OMA" id="VRIMRGD"/>
<dbReference type="OrthoDB" id="1688503at2759"/>
<dbReference type="Proteomes" id="UP000001811">
    <property type="component" value="Chromosome 19"/>
</dbReference>
<dbReference type="Bgee" id="ENSOCUG00000006538">
    <property type="expression patterns" value="Expressed in autopod skin and 14 other cell types or tissues"/>
</dbReference>
<dbReference type="GO" id="GO:0005737">
    <property type="term" value="C:cytoplasm"/>
    <property type="evidence" value="ECO:0007669"/>
    <property type="project" value="UniProtKB-SubCell"/>
</dbReference>
<dbReference type="GO" id="GO:0015934">
    <property type="term" value="C:large ribosomal subunit"/>
    <property type="evidence" value="ECO:0007669"/>
    <property type="project" value="InterPro"/>
</dbReference>
<dbReference type="GO" id="GO:0003723">
    <property type="term" value="F:RNA binding"/>
    <property type="evidence" value="ECO:0007669"/>
    <property type="project" value="InterPro"/>
</dbReference>
<dbReference type="GO" id="GO:0003735">
    <property type="term" value="F:structural constituent of ribosome"/>
    <property type="evidence" value="ECO:0007669"/>
    <property type="project" value="InterPro"/>
</dbReference>
<dbReference type="GO" id="GO:0006412">
    <property type="term" value="P:translation"/>
    <property type="evidence" value="ECO:0007669"/>
    <property type="project" value="InterPro"/>
</dbReference>
<dbReference type="CDD" id="cd06089">
    <property type="entry name" value="KOW_RPL26"/>
    <property type="match status" value="1"/>
</dbReference>
<dbReference type="FunFam" id="2.30.30.30:FF:000009">
    <property type="entry name" value="60S ribosomal protein L26"/>
    <property type="match status" value="1"/>
</dbReference>
<dbReference type="Gene3D" id="2.30.30.30">
    <property type="match status" value="1"/>
</dbReference>
<dbReference type="HAMAP" id="MF_01326_A">
    <property type="entry name" value="Ribosomal_uL24_A"/>
    <property type="match status" value="1"/>
</dbReference>
<dbReference type="InterPro" id="IPR005824">
    <property type="entry name" value="KOW"/>
</dbReference>
<dbReference type="InterPro" id="IPR014722">
    <property type="entry name" value="Rib_uL2_dom2"/>
</dbReference>
<dbReference type="InterPro" id="IPR005825">
    <property type="entry name" value="Ribosomal_uL24_CS"/>
</dbReference>
<dbReference type="InterPro" id="IPR005756">
    <property type="entry name" value="Ribosomal_uL24_euk/arc"/>
</dbReference>
<dbReference type="InterPro" id="IPR041988">
    <property type="entry name" value="Ribosomal_uL24_KOW"/>
</dbReference>
<dbReference type="InterPro" id="IPR008991">
    <property type="entry name" value="Translation_prot_SH3-like_sf"/>
</dbReference>
<dbReference type="NCBIfam" id="TIGR01080">
    <property type="entry name" value="rplX_A_E"/>
    <property type="match status" value="1"/>
</dbReference>
<dbReference type="PANTHER" id="PTHR11143">
    <property type="entry name" value="60S RIBOSOMAL PROTEIN L26 FAMILY MEMBER"/>
    <property type="match status" value="1"/>
</dbReference>
<dbReference type="Pfam" id="PF00467">
    <property type="entry name" value="KOW"/>
    <property type="match status" value="1"/>
</dbReference>
<dbReference type="Pfam" id="PF16906">
    <property type="entry name" value="Ribosomal_L26"/>
    <property type="match status" value="1"/>
</dbReference>
<dbReference type="SMART" id="SM00739">
    <property type="entry name" value="KOW"/>
    <property type="match status" value="1"/>
</dbReference>
<dbReference type="SUPFAM" id="SSF50104">
    <property type="entry name" value="Translation proteins SH3-like domain"/>
    <property type="match status" value="1"/>
</dbReference>
<dbReference type="PROSITE" id="PS01108">
    <property type="entry name" value="RIBOSOMAL_L24"/>
    <property type="match status" value="1"/>
</dbReference>
<feature type="chain" id="PRO_0000460116" description="Large ribosomal subunit protein uL24">
    <location>
        <begin position="1"/>
        <end position="145"/>
    </location>
</feature>
<feature type="region of interest" description="Disordered" evidence="2">
    <location>
        <begin position="1"/>
        <end position="21"/>
    </location>
</feature>
<feature type="region of interest" description="Disordered" evidence="2">
    <location>
        <begin position="122"/>
        <end position="145"/>
    </location>
</feature>
<feature type="modified residue" description="Phosphothreonine" evidence="1">
    <location>
        <position position="139"/>
    </location>
</feature>
<feature type="cross-link" description="Glycyl lysine isopeptide (Lys-Gly) (interchain with G-Cter in SUMO2)" evidence="1">
    <location>
        <position position="136"/>
    </location>
</feature>
<accession>G1SQH0</accession>
<sequence length="145" mass="17258">MKFNPFVTSDRSKNRKRHFNAPSHIRRKIMSSPLSKELRQKYNVRSMPIRKDDEVQVVRGHYKGQQIGKVVQVYRKKYVIYIERVQREKANGTTVHVGIHPSKVVITRLKLDKDRKKILERKAKSRQVGKEKGKYKEETIEKMQE</sequence>